<dbReference type="EMBL" id="CP000937">
    <property type="protein sequence ID" value="ABZ88088.1"/>
    <property type="molecule type" value="Genomic_DNA"/>
</dbReference>
<dbReference type="SMR" id="B0U169"/>
<dbReference type="KEGG" id="fph:Fphi_1862"/>
<dbReference type="eggNOG" id="COG2835">
    <property type="taxonomic scope" value="Bacteria"/>
</dbReference>
<dbReference type="HOGENOM" id="CLU_155659_3_1_6"/>
<dbReference type="GO" id="GO:0005829">
    <property type="term" value="C:cytosol"/>
    <property type="evidence" value="ECO:0007669"/>
    <property type="project" value="TreeGrafter"/>
</dbReference>
<dbReference type="FunFam" id="2.20.25.10:FF:000002">
    <property type="entry name" value="UPF0434 protein YcaR"/>
    <property type="match status" value="1"/>
</dbReference>
<dbReference type="Gene3D" id="2.20.25.10">
    <property type="match status" value="1"/>
</dbReference>
<dbReference type="HAMAP" id="MF_01187">
    <property type="entry name" value="UPF0434"/>
    <property type="match status" value="1"/>
</dbReference>
<dbReference type="InterPro" id="IPR005651">
    <property type="entry name" value="Trm112-like"/>
</dbReference>
<dbReference type="PANTHER" id="PTHR33505:SF4">
    <property type="entry name" value="PROTEIN PREY, MITOCHONDRIAL"/>
    <property type="match status" value="1"/>
</dbReference>
<dbReference type="PANTHER" id="PTHR33505">
    <property type="entry name" value="ZGC:162634"/>
    <property type="match status" value="1"/>
</dbReference>
<dbReference type="Pfam" id="PF03966">
    <property type="entry name" value="Trm112p"/>
    <property type="match status" value="1"/>
</dbReference>
<dbReference type="SUPFAM" id="SSF158997">
    <property type="entry name" value="Trm112p-like"/>
    <property type="match status" value="1"/>
</dbReference>
<name>Y1867_FRAP2</name>
<comment type="similarity">
    <text evidence="1">Belongs to the UPF0434 family.</text>
</comment>
<sequence>MDHSVLNVLVCPVCNSNLHYDKENQLLICKADKLAYPIRENIPVMLVEEAKKLTLEEVKKYG</sequence>
<accession>B0U169</accession>
<gene>
    <name type="ordered locus">Fphi_1862</name>
</gene>
<protein>
    <recommendedName>
        <fullName evidence="1">UPF0434 protein Fphi_1862</fullName>
    </recommendedName>
</protein>
<reference key="1">
    <citation type="submission" date="2007-12" db="EMBL/GenBank/DDBJ databases">
        <title>Complete sequence of chromosome of Francisella philomiragia subsp. philomiragia ATCC 25017.</title>
        <authorList>
            <consortium name="US DOE Joint Genome Institute"/>
            <person name="Copeland A."/>
            <person name="Lucas S."/>
            <person name="Lapidus A."/>
            <person name="Barry K."/>
            <person name="Detter J.C."/>
            <person name="Glavina del Rio T."/>
            <person name="Hammon N."/>
            <person name="Israni S."/>
            <person name="Dalin E."/>
            <person name="Tice H."/>
            <person name="Pitluck S."/>
            <person name="Chain P."/>
            <person name="Malfatti S."/>
            <person name="Shin M."/>
            <person name="Vergez L."/>
            <person name="Schmutz J."/>
            <person name="Larimer F."/>
            <person name="Land M."/>
            <person name="Hauser L."/>
            <person name="Richardson P."/>
        </authorList>
    </citation>
    <scope>NUCLEOTIDE SEQUENCE [LARGE SCALE GENOMIC DNA]</scope>
    <source>
        <strain>ATCC 25017 / CCUG 19701 / FSC 153 / O#319-036</strain>
    </source>
</reference>
<feature type="chain" id="PRO_1000085457" description="UPF0434 protein Fphi_1862">
    <location>
        <begin position="1"/>
        <end position="62"/>
    </location>
</feature>
<evidence type="ECO:0000255" key="1">
    <source>
        <dbReference type="HAMAP-Rule" id="MF_01187"/>
    </source>
</evidence>
<proteinExistence type="inferred from homology"/>
<organism>
    <name type="scientific">Francisella philomiragia subsp. philomiragia (strain ATCC 25017 / CCUG 19701 / FSC 153 / O#319-036)</name>
    <dbReference type="NCBI Taxonomy" id="484022"/>
    <lineage>
        <taxon>Bacteria</taxon>
        <taxon>Pseudomonadati</taxon>
        <taxon>Pseudomonadota</taxon>
        <taxon>Gammaproteobacteria</taxon>
        <taxon>Thiotrichales</taxon>
        <taxon>Francisellaceae</taxon>
        <taxon>Francisella</taxon>
    </lineage>
</organism>